<accession>Q7VKC6</accession>
<proteinExistence type="inferred from homology"/>
<name>RS20_HAEDU</name>
<protein>
    <recommendedName>
        <fullName evidence="1">Small ribosomal subunit protein bS20</fullName>
    </recommendedName>
    <alternativeName>
        <fullName evidence="3">30S ribosomal protein S20</fullName>
    </alternativeName>
</protein>
<evidence type="ECO:0000255" key="1">
    <source>
        <dbReference type="HAMAP-Rule" id="MF_00500"/>
    </source>
</evidence>
<evidence type="ECO:0000256" key="2">
    <source>
        <dbReference type="SAM" id="MobiDB-lite"/>
    </source>
</evidence>
<evidence type="ECO:0000305" key="3"/>
<sequence length="89" mass="9851">MTLANIKSAKKRAVQSEKRRQHNASQRSMMRTFIKKVYAAIATGDKAASQTAFVEMQKVVDRMASKGLIHANKAANHKAKLVAQIKKLA</sequence>
<reference key="1">
    <citation type="submission" date="2003-06" db="EMBL/GenBank/DDBJ databases">
        <title>The complete genome sequence of Haemophilus ducreyi.</title>
        <authorList>
            <person name="Munson R.S. Jr."/>
            <person name="Ray W.C."/>
            <person name="Mahairas G."/>
            <person name="Sabo P."/>
            <person name="Mungur R."/>
            <person name="Johnson L."/>
            <person name="Nguyen D."/>
            <person name="Wang J."/>
            <person name="Forst C."/>
            <person name="Hood L."/>
        </authorList>
    </citation>
    <scope>NUCLEOTIDE SEQUENCE [LARGE SCALE GENOMIC DNA]</scope>
    <source>
        <strain>35000HP / ATCC 700724</strain>
    </source>
</reference>
<feature type="chain" id="PRO_0000167968" description="Small ribosomal subunit protein bS20">
    <location>
        <begin position="1"/>
        <end position="89"/>
    </location>
</feature>
<feature type="region of interest" description="Disordered" evidence="2">
    <location>
        <begin position="1"/>
        <end position="28"/>
    </location>
</feature>
<keyword id="KW-1185">Reference proteome</keyword>
<keyword id="KW-0687">Ribonucleoprotein</keyword>
<keyword id="KW-0689">Ribosomal protein</keyword>
<keyword id="KW-0694">RNA-binding</keyword>
<keyword id="KW-0699">rRNA-binding</keyword>
<comment type="function">
    <text evidence="1">Binds directly to 16S ribosomal RNA.</text>
</comment>
<comment type="similarity">
    <text evidence="1">Belongs to the bacterial ribosomal protein bS20 family.</text>
</comment>
<organism>
    <name type="scientific">Haemophilus ducreyi (strain 35000HP / ATCC 700724)</name>
    <dbReference type="NCBI Taxonomy" id="233412"/>
    <lineage>
        <taxon>Bacteria</taxon>
        <taxon>Pseudomonadati</taxon>
        <taxon>Pseudomonadota</taxon>
        <taxon>Gammaproteobacteria</taxon>
        <taxon>Pasteurellales</taxon>
        <taxon>Pasteurellaceae</taxon>
        <taxon>Haemophilus</taxon>
    </lineage>
</organism>
<dbReference type="EMBL" id="AE017143">
    <property type="protein sequence ID" value="AAP96706.1"/>
    <property type="molecule type" value="Genomic_DNA"/>
</dbReference>
<dbReference type="SMR" id="Q7VKC6"/>
<dbReference type="STRING" id="233412.HD_1990"/>
<dbReference type="KEGG" id="hdu:HD_1990"/>
<dbReference type="eggNOG" id="COG0268">
    <property type="taxonomic scope" value="Bacteria"/>
</dbReference>
<dbReference type="HOGENOM" id="CLU_160655_4_0_6"/>
<dbReference type="Proteomes" id="UP000001022">
    <property type="component" value="Chromosome"/>
</dbReference>
<dbReference type="GO" id="GO:0005829">
    <property type="term" value="C:cytosol"/>
    <property type="evidence" value="ECO:0007669"/>
    <property type="project" value="TreeGrafter"/>
</dbReference>
<dbReference type="GO" id="GO:0015935">
    <property type="term" value="C:small ribosomal subunit"/>
    <property type="evidence" value="ECO:0007669"/>
    <property type="project" value="TreeGrafter"/>
</dbReference>
<dbReference type="GO" id="GO:0070181">
    <property type="term" value="F:small ribosomal subunit rRNA binding"/>
    <property type="evidence" value="ECO:0007669"/>
    <property type="project" value="TreeGrafter"/>
</dbReference>
<dbReference type="GO" id="GO:0003735">
    <property type="term" value="F:structural constituent of ribosome"/>
    <property type="evidence" value="ECO:0007669"/>
    <property type="project" value="InterPro"/>
</dbReference>
<dbReference type="GO" id="GO:0006412">
    <property type="term" value="P:translation"/>
    <property type="evidence" value="ECO:0007669"/>
    <property type="project" value="UniProtKB-UniRule"/>
</dbReference>
<dbReference type="FunFam" id="1.20.58.110:FF:000001">
    <property type="entry name" value="30S ribosomal protein S20"/>
    <property type="match status" value="1"/>
</dbReference>
<dbReference type="Gene3D" id="1.20.58.110">
    <property type="entry name" value="Ribosomal protein S20"/>
    <property type="match status" value="1"/>
</dbReference>
<dbReference type="HAMAP" id="MF_00500">
    <property type="entry name" value="Ribosomal_bS20"/>
    <property type="match status" value="1"/>
</dbReference>
<dbReference type="InterPro" id="IPR002583">
    <property type="entry name" value="Ribosomal_bS20"/>
</dbReference>
<dbReference type="InterPro" id="IPR036510">
    <property type="entry name" value="Ribosomal_bS20_sf"/>
</dbReference>
<dbReference type="NCBIfam" id="TIGR00029">
    <property type="entry name" value="S20"/>
    <property type="match status" value="1"/>
</dbReference>
<dbReference type="PANTHER" id="PTHR33398">
    <property type="entry name" value="30S RIBOSOMAL PROTEIN S20"/>
    <property type="match status" value="1"/>
</dbReference>
<dbReference type="PANTHER" id="PTHR33398:SF1">
    <property type="entry name" value="SMALL RIBOSOMAL SUBUNIT PROTEIN BS20C"/>
    <property type="match status" value="1"/>
</dbReference>
<dbReference type="Pfam" id="PF01649">
    <property type="entry name" value="Ribosomal_S20p"/>
    <property type="match status" value="1"/>
</dbReference>
<dbReference type="SUPFAM" id="SSF46992">
    <property type="entry name" value="Ribosomal protein S20"/>
    <property type="match status" value="1"/>
</dbReference>
<gene>
    <name evidence="1" type="primary">rpsT</name>
    <name type="ordered locus">HD_1990</name>
</gene>